<dbReference type="EC" id="3.1.3.64"/>
<dbReference type="EMBL" id="CU329670">
    <property type="protein sequence ID" value="CAB11639.1"/>
    <property type="molecule type" value="Genomic_DNA"/>
</dbReference>
<dbReference type="PIR" id="T37958">
    <property type="entry name" value="T37958"/>
</dbReference>
<dbReference type="SMR" id="O13819"/>
<dbReference type="BioGRID" id="278980">
    <property type="interactions" value="59"/>
</dbReference>
<dbReference type="FunCoup" id="O13819">
    <property type="interactions" value="215"/>
</dbReference>
<dbReference type="STRING" id="284812.O13819"/>
<dbReference type="iPTMnet" id="O13819"/>
<dbReference type="PaxDb" id="4896-SPAC19A8.03.1"/>
<dbReference type="EnsemblFungi" id="SPAC19A8.03.1">
    <property type="protein sequence ID" value="SPAC19A8.03.1:pep"/>
    <property type="gene ID" value="SPAC19A8.03"/>
</dbReference>
<dbReference type="KEGG" id="spo:2542522"/>
<dbReference type="PomBase" id="SPAC19A8.03"/>
<dbReference type="VEuPathDB" id="FungiDB:SPAC19A8.03"/>
<dbReference type="eggNOG" id="KOG1089">
    <property type="taxonomic scope" value="Eukaryota"/>
</dbReference>
<dbReference type="HOGENOM" id="CLU_001839_5_1_1"/>
<dbReference type="InParanoid" id="O13819"/>
<dbReference type="OMA" id="RTMEGFM"/>
<dbReference type="PhylomeDB" id="O13819"/>
<dbReference type="Reactome" id="R-SPO-1483248">
    <property type="pathway name" value="Synthesis of PIPs at the ER membrane"/>
</dbReference>
<dbReference type="Reactome" id="R-SPO-1632852">
    <property type="pathway name" value="Macroautophagy"/>
</dbReference>
<dbReference type="Reactome" id="R-SPO-1660499">
    <property type="pathway name" value="Synthesis of PIPs at the plasma membrane"/>
</dbReference>
<dbReference type="Reactome" id="R-SPO-1660516">
    <property type="pathway name" value="Synthesis of PIPs at the early endosome membrane"/>
</dbReference>
<dbReference type="Reactome" id="R-SPO-1660517">
    <property type="pathway name" value="Synthesis of PIPs at the late endosome membrane"/>
</dbReference>
<dbReference type="PRO" id="PR:O13819"/>
<dbReference type="Proteomes" id="UP000002485">
    <property type="component" value="Chromosome I"/>
</dbReference>
<dbReference type="GO" id="GO:0005737">
    <property type="term" value="C:cytoplasm"/>
    <property type="evidence" value="ECO:0007005"/>
    <property type="project" value="PomBase"/>
</dbReference>
<dbReference type="GO" id="GO:0005829">
    <property type="term" value="C:cytosol"/>
    <property type="evidence" value="ECO:0007005"/>
    <property type="project" value="PomBase"/>
</dbReference>
<dbReference type="GO" id="GO:0016020">
    <property type="term" value="C:membrane"/>
    <property type="evidence" value="ECO:0000318"/>
    <property type="project" value="GO_Central"/>
</dbReference>
<dbReference type="GO" id="GO:0004438">
    <property type="term" value="F:phosphatidylinositol-3-phosphate phosphatase activity"/>
    <property type="evidence" value="ECO:0000318"/>
    <property type="project" value="GO_Central"/>
</dbReference>
<dbReference type="GO" id="GO:0035556">
    <property type="term" value="P:intracellular signal transduction"/>
    <property type="evidence" value="ECO:0000305"/>
    <property type="project" value="PomBase"/>
</dbReference>
<dbReference type="GO" id="GO:0046856">
    <property type="term" value="P:phosphatidylinositol dephosphorylation"/>
    <property type="evidence" value="ECO:0000318"/>
    <property type="project" value="GO_Central"/>
</dbReference>
<dbReference type="CDD" id="cd17666">
    <property type="entry name" value="PTP-MTM-like_fungal"/>
    <property type="match status" value="1"/>
</dbReference>
<dbReference type="FunFam" id="2.30.29.30:FF:000135">
    <property type="entry name" value="Myotubularin related protein 6"/>
    <property type="match status" value="1"/>
</dbReference>
<dbReference type="Gene3D" id="2.30.29.30">
    <property type="entry name" value="Pleckstrin-homology domain (PH domain)/Phosphotyrosine-binding domain (PTB)"/>
    <property type="match status" value="1"/>
</dbReference>
<dbReference type="InterPro" id="IPR030564">
    <property type="entry name" value="Myotubularin"/>
</dbReference>
<dbReference type="InterPro" id="IPR010569">
    <property type="entry name" value="Myotubularin-like_Pase_dom"/>
</dbReference>
<dbReference type="InterPro" id="IPR011993">
    <property type="entry name" value="PH-like_dom_sf"/>
</dbReference>
<dbReference type="InterPro" id="IPR029021">
    <property type="entry name" value="Prot-tyrosine_phosphatase-like"/>
</dbReference>
<dbReference type="InterPro" id="IPR016130">
    <property type="entry name" value="Tyr_Pase_AS"/>
</dbReference>
<dbReference type="InterPro" id="IPR003595">
    <property type="entry name" value="Tyr_Pase_cat"/>
</dbReference>
<dbReference type="PANTHER" id="PTHR10807">
    <property type="entry name" value="MYOTUBULARIN-RELATED"/>
    <property type="match status" value="1"/>
</dbReference>
<dbReference type="PANTHER" id="PTHR10807:SF128">
    <property type="entry name" value="PHOSPHATIDYLINOSITOL-3,5-BISPHOSPHATE 3-PHOSPHATASE"/>
    <property type="match status" value="1"/>
</dbReference>
<dbReference type="Pfam" id="PF06602">
    <property type="entry name" value="Myotub-related"/>
    <property type="match status" value="1"/>
</dbReference>
<dbReference type="Pfam" id="PF21098">
    <property type="entry name" value="PH-GRAM_MTMR6-like"/>
    <property type="match status" value="1"/>
</dbReference>
<dbReference type="SMART" id="SM00404">
    <property type="entry name" value="PTPc_motif"/>
    <property type="match status" value="1"/>
</dbReference>
<dbReference type="SUPFAM" id="SSF52799">
    <property type="entry name" value="(Phosphotyrosine protein) phosphatases II"/>
    <property type="match status" value="1"/>
</dbReference>
<dbReference type="SUPFAM" id="SSF50729">
    <property type="entry name" value="PH domain-like"/>
    <property type="match status" value="1"/>
</dbReference>
<dbReference type="PROSITE" id="PS51339">
    <property type="entry name" value="PPASE_MYOTUBULARIN"/>
    <property type="match status" value="1"/>
</dbReference>
<dbReference type="PROSITE" id="PS00383">
    <property type="entry name" value="TYR_PHOSPHATASE_1"/>
    <property type="match status" value="1"/>
</dbReference>
<comment type="function">
    <text evidence="1">Lipid phosphatase which dephosphorylates phosphatidylinositol 3-monophosphate (PI3P). Involved in the control of PI3P-dependent signaling and in the maintenance of endosomal system integrity (By similarity).</text>
</comment>
<comment type="catalytic activity">
    <reaction>
        <text>a 1,2-diacyl-sn-glycero-3-phospho-(1D-myo-inositol-3-phosphate) + H2O = a 1,2-diacyl-sn-glycero-3-phospho-(1D-myo-inositol) + phosphate</text>
        <dbReference type="Rhea" id="RHEA:12316"/>
        <dbReference type="ChEBI" id="CHEBI:15377"/>
        <dbReference type="ChEBI" id="CHEBI:43474"/>
        <dbReference type="ChEBI" id="CHEBI:57880"/>
        <dbReference type="ChEBI" id="CHEBI:58088"/>
        <dbReference type="EC" id="3.1.3.64"/>
    </reaction>
</comment>
<comment type="subcellular location">
    <subcellularLocation>
        <location evidence="4">Cytoplasm</location>
    </subcellularLocation>
</comment>
<comment type="similarity">
    <text evidence="5">Belongs to the protein-tyrosine phosphatase family. Non-receptor class myotubularin subfamily.</text>
</comment>
<organism>
    <name type="scientific">Schizosaccharomyces pombe (strain 972 / ATCC 24843)</name>
    <name type="common">Fission yeast</name>
    <dbReference type="NCBI Taxonomy" id="284812"/>
    <lineage>
        <taxon>Eukaryota</taxon>
        <taxon>Fungi</taxon>
        <taxon>Dikarya</taxon>
        <taxon>Ascomycota</taxon>
        <taxon>Taphrinomycotina</taxon>
        <taxon>Schizosaccharomycetes</taxon>
        <taxon>Schizosaccharomycetales</taxon>
        <taxon>Schizosaccharomycetaceae</taxon>
        <taxon>Schizosaccharomyces</taxon>
    </lineage>
</organism>
<keyword id="KW-0963">Cytoplasm</keyword>
<keyword id="KW-0378">Hydrolase</keyword>
<keyword id="KW-1185">Reference proteome</keyword>
<protein>
    <recommendedName>
        <fullName>Phosphoinositide 3-phosphatase</fullName>
        <ecNumber>3.1.3.64</ecNumber>
    </recommendedName>
</protein>
<evidence type="ECO:0000250" key="1"/>
<evidence type="ECO:0000255" key="2">
    <source>
        <dbReference type="PROSITE-ProRule" id="PRU00669"/>
    </source>
</evidence>
<evidence type="ECO:0000255" key="3">
    <source>
        <dbReference type="PROSITE-ProRule" id="PRU10044"/>
    </source>
</evidence>
<evidence type="ECO:0000269" key="4">
    <source>
    </source>
</evidence>
<evidence type="ECO:0000305" key="5"/>
<sequence length="559" mass="64153">MENIKVAKVGNVKFVNKGNELNGTLHLTAYHSIFSISENGKEIWTAYSMINNVKLCSNEKSFCIRIQCRDFMFFCWRFQSTEDAMDVYDTLQELMSINSINMLYAFYYMPSGDEEKLPSSWKSFLLENEYRRMGVGDSTQADGAGGNWRITKINENYSECHSYPQALAVPASISDSVIYYGCKYRSKNRFPTLTYLHKNSFSITRASQPLVGIRQNRSAQDEKLVEAIFATSIIPGKENLIVDARPSTNAMANIAVGAGSENMDHYRFAKKIYLGIDNIHVMRDSLNKIVNALKNTDISAAPPLIELLNRSSWLKHLANILQGAVLIVKTVHFRHAHVLVHCSDGWDRTSQLCALPQLCLDPYYRTIEGFFALVEKDWLSFGHRFAERCCHLPGKRIFTIDSSYSEEPPQSSPSSTLQYTFSTVRSALSGFSIDHSEKMMSPVFHQFLDCVWQIMDQFPNCFEFNERFLRRLLYHLYSCQYGSFLYNSERERAQASVSTHTRCIWDYFLSRKDEFKNPNYVPYDDVIMPDPSSLRWWSASFAQPDENMNIPSPSESPSL</sequence>
<name>YMR1_SCHPO</name>
<gene>
    <name type="ORF">SPAC19A8.03</name>
</gene>
<reference key="1">
    <citation type="journal article" date="2002" name="Nature">
        <title>The genome sequence of Schizosaccharomyces pombe.</title>
        <authorList>
            <person name="Wood V."/>
            <person name="Gwilliam R."/>
            <person name="Rajandream M.A."/>
            <person name="Lyne M.H."/>
            <person name="Lyne R."/>
            <person name="Stewart A."/>
            <person name="Sgouros J.G."/>
            <person name="Peat N."/>
            <person name="Hayles J."/>
            <person name="Baker S.G."/>
            <person name="Basham D."/>
            <person name="Bowman S."/>
            <person name="Brooks K."/>
            <person name="Brown D."/>
            <person name="Brown S."/>
            <person name="Chillingworth T."/>
            <person name="Churcher C.M."/>
            <person name="Collins M."/>
            <person name="Connor R."/>
            <person name="Cronin A."/>
            <person name="Davis P."/>
            <person name="Feltwell T."/>
            <person name="Fraser A."/>
            <person name="Gentles S."/>
            <person name="Goble A."/>
            <person name="Hamlin N."/>
            <person name="Harris D.E."/>
            <person name="Hidalgo J."/>
            <person name="Hodgson G."/>
            <person name="Holroyd S."/>
            <person name="Hornsby T."/>
            <person name="Howarth S."/>
            <person name="Huckle E.J."/>
            <person name="Hunt S."/>
            <person name="Jagels K."/>
            <person name="James K.D."/>
            <person name="Jones L."/>
            <person name="Jones M."/>
            <person name="Leather S."/>
            <person name="McDonald S."/>
            <person name="McLean J."/>
            <person name="Mooney P."/>
            <person name="Moule S."/>
            <person name="Mungall K.L."/>
            <person name="Murphy L.D."/>
            <person name="Niblett D."/>
            <person name="Odell C."/>
            <person name="Oliver K."/>
            <person name="O'Neil S."/>
            <person name="Pearson D."/>
            <person name="Quail M.A."/>
            <person name="Rabbinowitsch E."/>
            <person name="Rutherford K.M."/>
            <person name="Rutter S."/>
            <person name="Saunders D."/>
            <person name="Seeger K."/>
            <person name="Sharp S."/>
            <person name="Skelton J."/>
            <person name="Simmonds M.N."/>
            <person name="Squares R."/>
            <person name="Squares S."/>
            <person name="Stevens K."/>
            <person name="Taylor K."/>
            <person name="Taylor R.G."/>
            <person name="Tivey A."/>
            <person name="Walsh S.V."/>
            <person name="Warren T."/>
            <person name="Whitehead S."/>
            <person name="Woodward J.R."/>
            <person name="Volckaert G."/>
            <person name="Aert R."/>
            <person name="Robben J."/>
            <person name="Grymonprez B."/>
            <person name="Weltjens I."/>
            <person name="Vanstreels E."/>
            <person name="Rieger M."/>
            <person name="Schaefer M."/>
            <person name="Mueller-Auer S."/>
            <person name="Gabel C."/>
            <person name="Fuchs M."/>
            <person name="Duesterhoeft A."/>
            <person name="Fritzc C."/>
            <person name="Holzer E."/>
            <person name="Moestl D."/>
            <person name="Hilbert H."/>
            <person name="Borzym K."/>
            <person name="Langer I."/>
            <person name="Beck A."/>
            <person name="Lehrach H."/>
            <person name="Reinhardt R."/>
            <person name="Pohl T.M."/>
            <person name="Eger P."/>
            <person name="Zimmermann W."/>
            <person name="Wedler H."/>
            <person name="Wambutt R."/>
            <person name="Purnelle B."/>
            <person name="Goffeau A."/>
            <person name="Cadieu E."/>
            <person name="Dreano S."/>
            <person name="Gloux S."/>
            <person name="Lelaure V."/>
            <person name="Mottier S."/>
            <person name="Galibert F."/>
            <person name="Aves S.J."/>
            <person name="Xiang Z."/>
            <person name="Hunt C."/>
            <person name="Moore K."/>
            <person name="Hurst S.M."/>
            <person name="Lucas M."/>
            <person name="Rochet M."/>
            <person name="Gaillardin C."/>
            <person name="Tallada V.A."/>
            <person name="Garzon A."/>
            <person name="Thode G."/>
            <person name="Daga R.R."/>
            <person name="Cruzado L."/>
            <person name="Jimenez J."/>
            <person name="Sanchez M."/>
            <person name="del Rey F."/>
            <person name="Benito J."/>
            <person name="Dominguez A."/>
            <person name="Revuelta J.L."/>
            <person name="Moreno S."/>
            <person name="Armstrong J."/>
            <person name="Forsburg S.L."/>
            <person name="Cerutti L."/>
            <person name="Lowe T."/>
            <person name="McCombie W.R."/>
            <person name="Paulsen I."/>
            <person name="Potashkin J."/>
            <person name="Shpakovski G.V."/>
            <person name="Ussery D."/>
            <person name="Barrell B.G."/>
            <person name="Nurse P."/>
        </authorList>
    </citation>
    <scope>NUCLEOTIDE SEQUENCE [LARGE SCALE GENOMIC DNA]</scope>
    <source>
        <strain>972 / ATCC 24843</strain>
    </source>
</reference>
<reference key="2">
    <citation type="journal article" date="2006" name="Nat. Biotechnol.">
        <title>ORFeome cloning and global analysis of protein localization in the fission yeast Schizosaccharomyces pombe.</title>
        <authorList>
            <person name="Matsuyama A."/>
            <person name="Arai R."/>
            <person name="Yashiroda Y."/>
            <person name="Shirai A."/>
            <person name="Kamata A."/>
            <person name="Sekido S."/>
            <person name="Kobayashi Y."/>
            <person name="Hashimoto A."/>
            <person name="Hamamoto M."/>
            <person name="Hiraoka Y."/>
            <person name="Horinouchi S."/>
            <person name="Yoshida M."/>
        </authorList>
    </citation>
    <scope>SUBCELLULAR LOCATION [LARGE SCALE ANALYSIS]</scope>
</reference>
<feature type="chain" id="PRO_0000356185" description="Phosphoinositide 3-phosphatase">
    <location>
        <begin position="1"/>
        <end position="559"/>
    </location>
</feature>
<feature type="domain" description="Myotubularin phosphatase" evidence="2">
    <location>
        <begin position="120"/>
        <end position="541"/>
    </location>
</feature>
<feature type="active site" description="Phosphocysteine intermediate" evidence="3">
    <location>
        <position position="342"/>
    </location>
</feature>
<accession>O13819</accession>
<proteinExistence type="inferred from homology"/>